<proteinExistence type="inferred from homology"/>
<protein>
    <recommendedName>
        <fullName>3-oxoacyl-[acyl-carrier-protein] synthase 2</fullName>
        <ecNumber evidence="2">2.3.1.179</ecNumber>
    </recommendedName>
    <alternativeName>
        <fullName>3-oxoacyl-[acyl-carrier-protein] synthase II</fullName>
    </alternativeName>
    <alternativeName>
        <fullName>Beta-ketoacyl-ACP synthase II</fullName>
        <shortName>KAS II</shortName>
    </alternativeName>
</protein>
<sequence>MSKRRVVVTGLGMLSPVGNTVESTWKALLAGQSGISLIDHFDTSAYATKFAGLVKDFNCEDIISRKEQRKMDAFIQYGIVAGVQAMQDSGLEITEENATRIGAAIGSGIGGLGLIEENHTSLMNGGPRKISPFFVPSTIVNMVAGHLTIMYGLRGPSISIATACTSGVHNIGHAARIIAYGDADVMVAGGAEKASTPLGVGGFGAARALSTRNDNPQAASRPWDKERDGFVLGDGAGMLVLEEYEHAKKRGAKIYAELVGFGMSSDAYHMTSPPENGAGAALAMANALRDAGIEASQIGYVNAHGTSTPAGDKAEAQAVKTIFGEAASRVLVSSTKSMTGHLLGAAGAVESIYSILALRDQAVPPTINLDNPDEGCDLDFVPHEARQVSGMEYTLCNSFGFGGTNGSLIFKKI</sequence>
<reference key="1">
    <citation type="journal article" date="2001" name="Nature">
        <title>Genome sequence of enterohaemorrhagic Escherichia coli O157:H7.</title>
        <authorList>
            <person name="Perna N.T."/>
            <person name="Plunkett G. III"/>
            <person name="Burland V."/>
            <person name="Mau B."/>
            <person name="Glasner J.D."/>
            <person name="Rose D.J."/>
            <person name="Mayhew G.F."/>
            <person name="Evans P.S."/>
            <person name="Gregor J."/>
            <person name="Kirkpatrick H.A."/>
            <person name="Posfai G."/>
            <person name="Hackett J."/>
            <person name="Klink S."/>
            <person name="Boutin A."/>
            <person name="Shao Y."/>
            <person name="Miller L."/>
            <person name="Grotbeck E.J."/>
            <person name="Davis N.W."/>
            <person name="Lim A."/>
            <person name="Dimalanta E.T."/>
            <person name="Potamousis K."/>
            <person name="Apodaca J."/>
            <person name="Anantharaman T.S."/>
            <person name="Lin J."/>
            <person name="Yen G."/>
            <person name="Schwartz D.C."/>
            <person name="Welch R.A."/>
            <person name="Blattner F.R."/>
        </authorList>
    </citation>
    <scope>NUCLEOTIDE SEQUENCE [LARGE SCALE GENOMIC DNA]</scope>
    <source>
        <strain>O157:H7 / EDL933 / ATCC 700927 / EHEC</strain>
    </source>
</reference>
<reference key="2">
    <citation type="journal article" date="2001" name="DNA Res.">
        <title>Complete genome sequence of enterohemorrhagic Escherichia coli O157:H7 and genomic comparison with a laboratory strain K-12.</title>
        <authorList>
            <person name="Hayashi T."/>
            <person name="Makino K."/>
            <person name="Ohnishi M."/>
            <person name="Kurokawa K."/>
            <person name="Ishii K."/>
            <person name="Yokoyama K."/>
            <person name="Han C.-G."/>
            <person name="Ohtsubo E."/>
            <person name="Nakayama K."/>
            <person name="Murata T."/>
            <person name="Tanaka M."/>
            <person name="Tobe T."/>
            <person name="Iida T."/>
            <person name="Takami H."/>
            <person name="Honda T."/>
            <person name="Sasakawa C."/>
            <person name="Ogasawara N."/>
            <person name="Yasunaga T."/>
            <person name="Kuhara S."/>
            <person name="Shiba T."/>
            <person name="Hattori M."/>
            <person name="Shinagawa H."/>
        </authorList>
    </citation>
    <scope>NUCLEOTIDE SEQUENCE [LARGE SCALE GENOMIC DNA]</scope>
    <source>
        <strain>O157:H7 / Sakai / RIMD 0509952 / EHEC</strain>
    </source>
</reference>
<dbReference type="EC" id="2.3.1.179" evidence="2"/>
<dbReference type="EMBL" id="AE005174">
    <property type="protein sequence ID" value="AAG55841.1"/>
    <property type="molecule type" value="Genomic_DNA"/>
</dbReference>
<dbReference type="EMBL" id="BA000007">
    <property type="protein sequence ID" value="BAB34896.1"/>
    <property type="molecule type" value="Genomic_DNA"/>
</dbReference>
<dbReference type="PIR" id="A99813">
    <property type="entry name" value="A99813"/>
</dbReference>
<dbReference type="PIR" id="E85672">
    <property type="entry name" value="E85672"/>
</dbReference>
<dbReference type="RefSeq" id="WP_000044679.1">
    <property type="nucleotide sequence ID" value="NZ_VOAI01000018.1"/>
</dbReference>
<dbReference type="SMR" id="P0AAI7"/>
<dbReference type="STRING" id="155864.Z1734"/>
<dbReference type="GeneID" id="86945966"/>
<dbReference type="KEGG" id="ece:Z1734"/>
<dbReference type="KEGG" id="ecs:ECs_1473"/>
<dbReference type="PATRIC" id="fig|386585.9.peg.1573"/>
<dbReference type="eggNOG" id="COG0304">
    <property type="taxonomic scope" value="Bacteria"/>
</dbReference>
<dbReference type="HOGENOM" id="CLU_000022_69_2_6"/>
<dbReference type="OMA" id="QIGHCLG"/>
<dbReference type="UniPathway" id="UPA00094"/>
<dbReference type="Proteomes" id="UP000000558">
    <property type="component" value="Chromosome"/>
</dbReference>
<dbReference type="Proteomes" id="UP000002519">
    <property type="component" value="Chromosome"/>
</dbReference>
<dbReference type="GO" id="GO:0005829">
    <property type="term" value="C:cytosol"/>
    <property type="evidence" value="ECO:0007669"/>
    <property type="project" value="TreeGrafter"/>
</dbReference>
<dbReference type="GO" id="GO:0004315">
    <property type="term" value="F:3-oxoacyl-[acyl-carrier-protein] synthase activity"/>
    <property type="evidence" value="ECO:0007669"/>
    <property type="project" value="UniProtKB-EC"/>
</dbReference>
<dbReference type="GO" id="GO:0006633">
    <property type="term" value="P:fatty acid biosynthetic process"/>
    <property type="evidence" value="ECO:0007669"/>
    <property type="project" value="UniProtKB-UniPathway"/>
</dbReference>
<dbReference type="CDD" id="cd00834">
    <property type="entry name" value="KAS_I_II"/>
    <property type="match status" value="1"/>
</dbReference>
<dbReference type="FunFam" id="3.40.47.10:FF:000009">
    <property type="entry name" value="3-oxoacyl-[acyl-carrier-protein] synthase 2"/>
    <property type="match status" value="1"/>
</dbReference>
<dbReference type="Gene3D" id="3.40.47.10">
    <property type="match status" value="1"/>
</dbReference>
<dbReference type="InterPro" id="IPR017568">
    <property type="entry name" value="3-oxoacyl-ACP_synth-2"/>
</dbReference>
<dbReference type="InterPro" id="IPR000794">
    <property type="entry name" value="Beta-ketoacyl_synthase"/>
</dbReference>
<dbReference type="InterPro" id="IPR018201">
    <property type="entry name" value="Ketoacyl_synth_AS"/>
</dbReference>
<dbReference type="InterPro" id="IPR014031">
    <property type="entry name" value="Ketoacyl_synth_C"/>
</dbReference>
<dbReference type="InterPro" id="IPR014030">
    <property type="entry name" value="Ketoacyl_synth_N"/>
</dbReference>
<dbReference type="InterPro" id="IPR020841">
    <property type="entry name" value="PKS_Beta-ketoAc_synthase_dom"/>
</dbReference>
<dbReference type="InterPro" id="IPR016039">
    <property type="entry name" value="Thiolase-like"/>
</dbReference>
<dbReference type="NCBIfam" id="TIGR03150">
    <property type="entry name" value="fabF"/>
    <property type="match status" value="1"/>
</dbReference>
<dbReference type="NCBIfam" id="NF004970">
    <property type="entry name" value="PRK06333.1"/>
    <property type="match status" value="1"/>
</dbReference>
<dbReference type="NCBIfam" id="NF005589">
    <property type="entry name" value="PRK07314.1"/>
    <property type="match status" value="1"/>
</dbReference>
<dbReference type="NCBIfam" id="NF006434">
    <property type="entry name" value="PRK08722.1"/>
    <property type="match status" value="1"/>
</dbReference>
<dbReference type="PANTHER" id="PTHR11712:SF336">
    <property type="entry name" value="3-OXOACYL-[ACYL-CARRIER-PROTEIN] SYNTHASE, MITOCHONDRIAL"/>
    <property type="match status" value="1"/>
</dbReference>
<dbReference type="PANTHER" id="PTHR11712">
    <property type="entry name" value="POLYKETIDE SYNTHASE-RELATED"/>
    <property type="match status" value="1"/>
</dbReference>
<dbReference type="Pfam" id="PF00109">
    <property type="entry name" value="ketoacyl-synt"/>
    <property type="match status" value="1"/>
</dbReference>
<dbReference type="Pfam" id="PF02801">
    <property type="entry name" value="Ketoacyl-synt_C"/>
    <property type="match status" value="1"/>
</dbReference>
<dbReference type="PIRSF" id="PIRSF000447">
    <property type="entry name" value="KAS_II"/>
    <property type="match status" value="1"/>
</dbReference>
<dbReference type="SMART" id="SM00825">
    <property type="entry name" value="PKS_KS"/>
    <property type="match status" value="1"/>
</dbReference>
<dbReference type="SUPFAM" id="SSF53901">
    <property type="entry name" value="Thiolase-like"/>
    <property type="match status" value="2"/>
</dbReference>
<dbReference type="PROSITE" id="PS00606">
    <property type="entry name" value="KS3_1"/>
    <property type="match status" value="1"/>
</dbReference>
<dbReference type="PROSITE" id="PS52004">
    <property type="entry name" value="KS3_2"/>
    <property type="match status" value="1"/>
</dbReference>
<name>FABF_ECO57</name>
<organism>
    <name type="scientific">Escherichia coli O157:H7</name>
    <dbReference type="NCBI Taxonomy" id="83334"/>
    <lineage>
        <taxon>Bacteria</taxon>
        <taxon>Pseudomonadati</taxon>
        <taxon>Pseudomonadota</taxon>
        <taxon>Gammaproteobacteria</taxon>
        <taxon>Enterobacterales</taxon>
        <taxon>Enterobacteriaceae</taxon>
        <taxon>Escherichia</taxon>
    </lineage>
</organism>
<comment type="function">
    <text evidence="2">Involved in the type II fatty acid elongation cycle. Catalyzes the elongation of a wide range of acyl-ACP by the addition of two carbons from malonyl-ACP to an acyl acceptor. Can efficiently catalyze the conversion of palmitoleoyl-ACP (cis-hexadec-9-enoyl-ACP) to cis-vaccenoyl-ACP (cis-octadec-11-enoyl-ACP), an essential step in the thermal regulation of fatty acid composition.</text>
</comment>
<comment type="catalytic activity">
    <reaction evidence="2">
        <text>a fatty acyl-[ACP] + malonyl-[ACP] + H(+) = a 3-oxoacyl-[ACP] + holo-[ACP] + CO2</text>
        <dbReference type="Rhea" id="RHEA:22836"/>
        <dbReference type="Rhea" id="RHEA-COMP:9623"/>
        <dbReference type="Rhea" id="RHEA-COMP:9685"/>
        <dbReference type="Rhea" id="RHEA-COMP:9916"/>
        <dbReference type="Rhea" id="RHEA-COMP:14125"/>
        <dbReference type="ChEBI" id="CHEBI:15378"/>
        <dbReference type="ChEBI" id="CHEBI:16526"/>
        <dbReference type="ChEBI" id="CHEBI:64479"/>
        <dbReference type="ChEBI" id="CHEBI:78449"/>
        <dbReference type="ChEBI" id="CHEBI:78776"/>
        <dbReference type="ChEBI" id="CHEBI:138651"/>
    </reaction>
</comment>
<comment type="catalytic activity">
    <reaction evidence="2">
        <text>(9Z)-hexadecenoyl-[ACP] + malonyl-[ACP] + H(+) = 3-oxo-(11Z)-octadecenoyl-[ACP] + holo-[ACP] + CO2</text>
        <dbReference type="Rhea" id="RHEA:55040"/>
        <dbReference type="Rhea" id="RHEA-COMP:9623"/>
        <dbReference type="Rhea" id="RHEA-COMP:9685"/>
        <dbReference type="Rhea" id="RHEA-COMP:10800"/>
        <dbReference type="Rhea" id="RHEA-COMP:14074"/>
        <dbReference type="ChEBI" id="CHEBI:15378"/>
        <dbReference type="ChEBI" id="CHEBI:16526"/>
        <dbReference type="ChEBI" id="CHEBI:64479"/>
        <dbReference type="ChEBI" id="CHEBI:78449"/>
        <dbReference type="ChEBI" id="CHEBI:83989"/>
        <dbReference type="ChEBI" id="CHEBI:138538"/>
        <dbReference type="EC" id="2.3.1.179"/>
    </reaction>
</comment>
<comment type="pathway">
    <text evidence="2">Lipid metabolism; fatty acid biosynthesis.</text>
</comment>
<comment type="subunit">
    <text evidence="2">Homodimer.</text>
</comment>
<comment type="similarity">
    <text evidence="4">Belongs to the thiolase-like superfamily. Beta-ketoacyl-ACP synthases family.</text>
</comment>
<feature type="initiator methionine" description="Removed" evidence="1">
    <location>
        <position position="1"/>
    </location>
</feature>
<feature type="chain" id="PRO_0000180315" description="3-oxoacyl-[acyl-carrier-protein] synthase 2">
    <location>
        <begin position="2"/>
        <end position="413"/>
    </location>
</feature>
<feature type="domain" description="Ketosynthase family 3 (KS3)" evidence="3">
    <location>
        <begin position="3"/>
        <end position="412"/>
    </location>
</feature>
<feature type="active site" description="For beta-ketoacyl synthase activity" evidence="3">
    <location>
        <position position="164"/>
    </location>
</feature>
<feature type="active site" description="For beta-ketoacyl synthase activity" evidence="3">
    <location>
        <position position="304"/>
    </location>
</feature>
<feature type="active site" description="For beta-ketoacyl synthase activity" evidence="3">
    <location>
        <position position="341"/>
    </location>
</feature>
<keyword id="KW-0012">Acyltransferase</keyword>
<keyword id="KW-0275">Fatty acid biosynthesis</keyword>
<keyword id="KW-0276">Fatty acid metabolism</keyword>
<keyword id="KW-0444">Lipid biosynthesis</keyword>
<keyword id="KW-0443">Lipid metabolism</keyword>
<keyword id="KW-1185">Reference proteome</keyword>
<keyword id="KW-0808">Transferase</keyword>
<accession>P0AAI7</accession>
<accession>P39435</accession>
<gene>
    <name type="primary">fabF</name>
    <name type="ordered locus">Z1734</name>
    <name type="ordered locus">ECs1473</name>
</gene>
<evidence type="ECO:0000250" key="1"/>
<evidence type="ECO:0000250" key="2">
    <source>
        <dbReference type="UniProtKB" id="P0AAI5"/>
    </source>
</evidence>
<evidence type="ECO:0000255" key="3">
    <source>
        <dbReference type="PROSITE-ProRule" id="PRU01348"/>
    </source>
</evidence>
<evidence type="ECO:0000305" key="4"/>